<name>T2R14_MACMU</name>
<organism>
    <name type="scientific">Macaca mulatta</name>
    <name type="common">Rhesus macaque</name>
    <dbReference type="NCBI Taxonomy" id="9544"/>
    <lineage>
        <taxon>Eukaryota</taxon>
        <taxon>Metazoa</taxon>
        <taxon>Chordata</taxon>
        <taxon>Craniata</taxon>
        <taxon>Vertebrata</taxon>
        <taxon>Euteleostomi</taxon>
        <taxon>Mammalia</taxon>
        <taxon>Eutheria</taxon>
        <taxon>Euarchontoglires</taxon>
        <taxon>Primates</taxon>
        <taxon>Haplorrhini</taxon>
        <taxon>Catarrhini</taxon>
        <taxon>Cercopithecidae</taxon>
        <taxon>Cercopithecinae</taxon>
        <taxon>Macaca</taxon>
    </lineage>
</organism>
<comment type="function">
    <text evidence="1">Gustducin-linked G-protein coupled receptor that plays a role in the perception of bitterness (By similarity). The activity of this receptor stimulates GNAT3, activating the gustducin G-protein pathway (By similarity). Likely plays a role in sensing the chemical composition of the gastrointestinal content and other extra-oral tissues via the inhibitory G-protein pathways (By similarity).</text>
</comment>
<comment type="catalytic activity">
    <reaction evidence="1">
        <text>Ca(2+)(in) = Ca(2+)(out)</text>
        <dbReference type="Rhea" id="RHEA:29671"/>
        <dbReference type="ChEBI" id="CHEBI:29108"/>
    </reaction>
</comment>
<comment type="catalytic activity">
    <reaction evidence="1">
        <text>3',5'-cyclic AMP(in) = 3',5'-cyclic AMP(out)</text>
        <dbReference type="Rhea" id="RHEA:76223"/>
        <dbReference type="ChEBI" id="CHEBI:58165"/>
    </reaction>
</comment>
<comment type="activity regulation">
    <text evidence="1">Basal activity is enhanced by binding to bitter tastants, such as flufenamic acid and aristolochic acid (By similarity). Regulated by cholesterol in a concentration-dependent manner (By similarity).</text>
</comment>
<comment type="subunit">
    <text evidence="1">Core component of the TAS2R14-GNAI1 complex, consisting of TAS2R14, GNAI1, GNB1 and GNG2; within the complex interacts with GNAI1 (By similarity). Core component of the TAS2R14-GNAT3 complex, consisting of TAS2R14, GNAT3, GNB1 and GNG2; within the complex interacts with GNAT3 (By similarity). Core component of the TAS2R14-GNAS2 complex, consisting of TAS2R14, GNAS2, GNB1 and GNG2; within the complex interacts with GNAS2 (By similarity).</text>
</comment>
<comment type="subcellular location">
    <subcellularLocation>
        <location>Membrane</location>
        <topology evidence="1">Multi-pass membrane protein</topology>
    </subcellularLocation>
</comment>
<comment type="miscellaneous">
    <text>Most taste cells may be activated by a limited number of bitter compounds; individual taste cells can discriminate among bitter stimuli.</text>
</comment>
<comment type="similarity">
    <text evidence="3">Belongs to the G-protein coupled receptor T2R family.</text>
</comment>
<feature type="chain" id="PRO_0000082256" description="Taste receptor type 2 member 14">
    <location>
        <begin position="1"/>
        <end position="319"/>
    </location>
</feature>
<feature type="topological domain" description="Extracellular" evidence="1">
    <location>
        <begin position="1"/>
        <end position="7"/>
    </location>
</feature>
<feature type="transmembrane region" description="Helical; Name=1" evidence="1">
    <location>
        <begin position="8"/>
        <end position="28"/>
    </location>
</feature>
<feature type="topological domain" description="Cytoplasmic" evidence="1">
    <location>
        <begin position="29"/>
        <end position="55"/>
    </location>
</feature>
<feature type="transmembrane region" description="Helical; Name=2" evidence="1">
    <location>
        <begin position="56"/>
        <end position="76"/>
    </location>
</feature>
<feature type="topological domain" description="Extracellular" evidence="1">
    <location>
        <begin position="77"/>
        <end position="87"/>
    </location>
</feature>
<feature type="transmembrane region" description="Helical; Name=3" evidence="1">
    <location>
        <begin position="88"/>
        <end position="108"/>
    </location>
</feature>
<feature type="topological domain" description="Cytoplasmic" evidence="1">
    <location>
        <begin position="109"/>
        <end position="129"/>
    </location>
</feature>
<feature type="transmembrane region" description="Helical; Name=4" evidence="1">
    <location>
        <begin position="130"/>
        <end position="150"/>
    </location>
</feature>
<feature type="topological domain" description="Extracellular" evidence="1">
    <location>
        <begin position="151"/>
        <end position="184"/>
    </location>
</feature>
<feature type="transmembrane region" description="Helical; Name=5" evidence="1">
    <location>
        <begin position="185"/>
        <end position="205"/>
    </location>
</feature>
<feature type="topological domain" description="Cytoplasmic" evidence="1">
    <location>
        <begin position="206"/>
        <end position="233"/>
    </location>
</feature>
<feature type="transmembrane region" description="Helical; Name=6" evidence="1">
    <location>
        <begin position="234"/>
        <end position="254"/>
    </location>
</feature>
<feature type="topological domain" description="Extracellular" evidence="1">
    <location>
        <begin position="255"/>
        <end position="263"/>
    </location>
</feature>
<feature type="transmembrane region" description="Helical; Name=7" evidence="1">
    <location>
        <begin position="264"/>
        <end position="284"/>
    </location>
</feature>
<feature type="topological domain" description="Cytoplasmic" evidence="1">
    <location>
        <begin position="285"/>
        <end position="319"/>
    </location>
</feature>
<feature type="binding site" evidence="1">
    <location>
        <position position="86"/>
    </location>
    <ligand>
        <name>cholesterol</name>
        <dbReference type="ChEBI" id="CHEBI:16113"/>
    </ligand>
</feature>
<feature type="binding site" evidence="1">
    <location>
        <position position="89"/>
    </location>
    <ligand>
        <name>cholesterol</name>
        <dbReference type="ChEBI" id="CHEBI:16113"/>
    </ligand>
</feature>
<feature type="binding site" evidence="1">
    <location>
        <position position="180"/>
    </location>
    <ligand>
        <name>cholesterol</name>
        <dbReference type="ChEBI" id="CHEBI:16113"/>
    </ligand>
</feature>
<feature type="binding site" evidence="1">
    <location>
        <position position="267"/>
    </location>
    <ligand>
        <name>cholesterol</name>
        <dbReference type="ChEBI" id="CHEBI:16113"/>
    </ligand>
</feature>
<feature type="binding site" evidence="1">
    <location>
        <position position="270"/>
    </location>
    <ligand>
        <name>cholesterol</name>
        <dbReference type="ChEBI" id="CHEBI:16113"/>
    </ligand>
</feature>
<feature type="glycosylation site" description="N-linked (GlcNAc...) asparagine" evidence="2">
    <location>
        <position position="153"/>
    </location>
</feature>
<feature type="glycosylation site" description="N-linked (GlcNAc...) asparagine" evidence="2">
    <location>
        <position position="162"/>
    </location>
</feature>
<protein>
    <recommendedName>
        <fullName>Taste receptor type 2 member 14</fullName>
        <shortName>T2R14</shortName>
    </recommendedName>
</protein>
<evidence type="ECO:0000250" key="1">
    <source>
        <dbReference type="UniProtKB" id="Q9NYV8"/>
    </source>
</evidence>
<evidence type="ECO:0000255" key="2"/>
<evidence type="ECO:0000305" key="3"/>
<keyword id="KW-0297">G-protein coupled receptor</keyword>
<keyword id="KW-0325">Glycoprotein</keyword>
<keyword id="KW-0472">Membrane</keyword>
<keyword id="KW-0675">Receptor</keyword>
<keyword id="KW-1185">Reference proteome</keyword>
<keyword id="KW-0716">Sensory transduction</keyword>
<keyword id="KW-0919">Taste</keyword>
<keyword id="KW-0807">Transducer</keyword>
<keyword id="KW-0812">Transmembrane</keyword>
<keyword id="KW-1133">Transmembrane helix</keyword>
<accession>Q645T2</accession>
<dbReference type="EMBL" id="AY725008">
    <property type="protein sequence ID" value="AAU21187.1"/>
    <property type="molecule type" value="Genomic_DNA"/>
</dbReference>
<dbReference type="SMR" id="Q645T2"/>
<dbReference type="FunCoup" id="Q645T2">
    <property type="interactions" value="430"/>
</dbReference>
<dbReference type="STRING" id="9544.ENSMMUP00000075098"/>
<dbReference type="GlyCosmos" id="Q645T2">
    <property type="glycosylation" value="2 sites, No reported glycans"/>
</dbReference>
<dbReference type="PaxDb" id="9544-ENSMMUP00000025338"/>
<dbReference type="eggNOG" id="ENOG502SKRK">
    <property type="taxonomic scope" value="Eukaryota"/>
</dbReference>
<dbReference type="InParanoid" id="Q645T2"/>
<dbReference type="Proteomes" id="UP000006718">
    <property type="component" value="Unassembled WGS sequence"/>
</dbReference>
<dbReference type="GO" id="GO:0016020">
    <property type="term" value="C:membrane"/>
    <property type="evidence" value="ECO:0000318"/>
    <property type="project" value="GO_Central"/>
</dbReference>
<dbReference type="GO" id="GO:0005886">
    <property type="term" value="C:plasma membrane"/>
    <property type="evidence" value="ECO:0007669"/>
    <property type="project" value="UniProtKB-ARBA"/>
</dbReference>
<dbReference type="GO" id="GO:0033038">
    <property type="term" value="F:bitter taste receptor activity"/>
    <property type="evidence" value="ECO:0000318"/>
    <property type="project" value="GO_Central"/>
</dbReference>
<dbReference type="GO" id="GO:0004930">
    <property type="term" value="F:G protein-coupled receptor activity"/>
    <property type="evidence" value="ECO:0007669"/>
    <property type="project" value="UniProtKB-KW"/>
</dbReference>
<dbReference type="GO" id="GO:0001580">
    <property type="term" value="P:detection of chemical stimulus involved in sensory perception of bitter taste"/>
    <property type="evidence" value="ECO:0000318"/>
    <property type="project" value="GO_Central"/>
</dbReference>
<dbReference type="CDD" id="cd15019">
    <property type="entry name" value="7tm_TAS2R14-like"/>
    <property type="match status" value="1"/>
</dbReference>
<dbReference type="FunFam" id="1.20.1070.10:FF:000042">
    <property type="entry name" value="Taste receptor type 2 member 7"/>
    <property type="match status" value="1"/>
</dbReference>
<dbReference type="Gene3D" id="1.20.1070.10">
    <property type="entry name" value="Rhodopsin 7-helix transmembrane proteins"/>
    <property type="match status" value="1"/>
</dbReference>
<dbReference type="InterPro" id="IPR007960">
    <property type="entry name" value="TAS2R"/>
</dbReference>
<dbReference type="PANTHER" id="PTHR11394">
    <property type="entry name" value="TASTE RECEPTOR TYPE 2"/>
    <property type="match status" value="1"/>
</dbReference>
<dbReference type="PANTHER" id="PTHR11394:SF23">
    <property type="entry name" value="TASTE RECEPTOR TYPE 2 MEMBER 14"/>
    <property type="match status" value="1"/>
</dbReference>
<dbReference type="Pfam" id="PF05296">
    <property type="entry name" value="TAS2R"/>
    <property type="match status" value="1"/>
</dbReference>
<dbReference type="SUPFAM" id="SSF81321">
    <property type="entry name" value="Family A G protein-coupled receptor-like"/>
    <property type="match status" value="1"/>
</dbReference>
<reference key="1">
    <citation type="journal article" date="2005" name="Mol. Biol. Evol.">
        <title>Evolution of bitter taste receptors in humans and apes.</title>
        <authorList>
            <person name="Fischer A."/>
            <person name="Gilad Y."/>
            <person name="Man O."/>
            <person name="Paeaebo S."/>
        </authorList>
    </citation>
    <scope>NUCLEOTIDE SEQUENCE [GENOMIC DNA]</scope>
</reference>
<proteinExistence type="inferred from homology"/>
<gene>
    <name type="primary">TAS2R14</name>
</gene>
<sequence>MDGVIKSIFTFILIVEFIIGNLGNSFIVLVNCIDWVKRRKISLVDQILIALAISRISLVWSIFGSWCVSVFFPALFATEKLLRMLTNIWTVTNHFSVWLATILGTFYFLKIANFSNSIFLYLKWRVKKVVLVLLLVTLGLLFLNILLINIHINASINGYRGNMTCSSASCNFIRFSRAIALTSTVFVLIPFTLSLATSLLLSFSLWKHHKKMQHTVKGYRDVSTKAHRGVMQTVITFLLLYAVFLLTFFISIWASVRLKENQIIILSEMMGLAYPSGHSCVLILGNKKLRQASLSVLWWLRYRFKHGEPSGHKEFRESS</sequence>